<name>ATPE_SHEON</name>
<feature type="chain" id="PRO_0000188198" description="ATP synthase epsilon chain">
    <location>
        <begin position="1"/>
        <end position="142"/>
    </location>
</feature>
<reference key="1">
    <citation type="journal article" date="2002" name="Nat. Biotechnol.">
        <title>Genome sequence of the dissimilatory metal ion-reducing bacterium Shewanella oneidensis.</title>
        <authorList>
            <person name="Heidelberg J.F."/>
            <person name="Paulsen I.T."/>
            <person name="Nelson K.E."/>
            <person name="Gaidos E.J."/>
            <person name="Nelson W.C."/>
            <person name="Read T.D."/>
            <person name="Eisen J.A."/>
            <person name="Seshadri R."/>
            <person name="Ward N.L."/>
            <person name="Methe B.A."/>
            <person name="Clayton R.A."/>
            <person name="Meyer T."/>
            <person name="Tsapin A."/>
            <person name="Scott J."/>
            <person name="Beanan M.J."/>
            <person name="Brinkac L.M."/>
            <person name="Daugherty S.C."/>
            <person name="DeBoy R.T."/>
            <person name="Dodson R.J."/>
            <person name="Durkin A.S."/>
            <person name="Haft D.H."/>
            <person name="Kolonay J.F."/>
            <person name="Madupu R."/>
            <person name="Peterson J.D."/>
            <person name="Umayam L.A."/>
            <person name="White O."/>
            <person name="Wolf A.M."/>
            <person name="Vamathevan J.J."/>
            <person name="Weidman J.F."/>
            <person name="Impraim M."/>
            <person name="Lee K."/>
            <person name="Berry K.J."/>
            <person name="Lee C."/>
            <person name="Mueller J."/>
            <person name="Khouri H.M."/>
            <person name="Gill J."/>
            <person name="Utterback T.R."/>
            <person name="McDonald L.A."/>
            <person name="Feldblyum T.V."/>
            <person name="Smith H.O."/>
            <person name="Venter J.C."/>
            <person name="Nealson K.H."/>
            <person name="Fraser C.M."/>
        </authorList>
    </citation>
    <scope>NUCLEOTIDE SEQUENCE [LARGE SCALE GENOMIC DNA]</scope>
    <source>
        <strain>ATCC 700550 / JCM 31522 / CIP 106686 / LMG 19005 / NCIMB 14063 / MR-1</strain>
    </source>
</reference>
<evidence type="ECO:0000255" key="1">
    <source>
        <dbReference type="HAMAP-Rule" id="MF_00530"/>
    </source>
</evidence>
<keyword id="KW-0066">ATP synthesis</keyword>
<keyword id="KW-0997">Cell inner membrane</keyword>
<keyword id="KW-1003">Cell membrane</keyword>
<keyword id="KW-0139">CF(1)</keyword>
<keyword id="KW-0375">Hydrogen ion transport</keyword>
<keyword id="KW-0406">Ion transport</keyword>
<keyword id="KW-0472">Membrane</keyword>
<keyword id="KW-1185">Reference proteome</keyword>
<keyword id="KW-0813">Transport</keyword>
<comment type="function">
    <text evidence="1">Produces ATP from ADP in the presence of a proton gradient across the membrane.</text>
</comment>
<comment type="subunit">
    <text>F-type ATPases have 2 components, CF(1) - the catalytic core - and CF(0) - the membrane proton channel. CF(1) has five subunits: alpha(3), beta(3), gamma(1), delta(1), epsilon(1). CF(0) has three main subunits: a, b and c.</text>
</comment>
<comment type="subcellular location">
    <subcellularLocation>
        <location evidence="1">Cell inner membrane</location>
        <topology evidence="1">Peripheral membrane protein</topology>
    </subcellularLocation>
</comment>
<comment type="similarity">
    <text evidence="1">Belongs to the ATPase epsilon chain family.</text>
</comment>
<organism>
    <name type="scientific">Shewanella oneidensis (strain ATCC 700550 / JCM 31522 / CIP 106686 / LMG 19005 / NCIMB 14063 / MR-1)</name>
    <dbReference type="NCBI Taxonomy" id="211586"/>
    <lineage>
        <taxon>Bacteria</taxon>
        <taxon>Pseudomonadati</taxon>
        <taxon>Pseudomonadota</taxon>
        <taxon>Gammaproteobacteria</taxon>
        <taxon>Alteromonadales</taxon>
        <taxon>Shewanellaceae</taxon>
        <taxon>Shewanella</taxon>
    </lineage>
</organism>
<gene>
    <name evidence="1" type="primary">atpC</name>
    <name type="ordered locus">SO_4746</name>
</gene>
<proteinExistence type="inferred from homology"/>
<sequence>MAAMTVQLDIVSAESSIFSGRVASLQVTGSEGELGIMHGHAPLLSYIKPGMARIVKQDGNEEVFYLSGGLLEVQPSSVSVLADVVMRAKDIDEQAALEAKRRAEAHMATAGADFNYDAAMVELAKAMAQLRVVETIKKNIAR</sequence>
<protein>
    <recommendedName>
        <fullName evidence="1">ATP synthase epsilon chain</fullName>
    </recommendedName>
    <alternativeName>
        <fullName evidence="1">ATP synthase F1 sector epsilon subunit</fullName>
    </alternativeName>
    <alternativeName>
        <fullName evidence="1">F-ATPase epsilon subunit</fullName>
    </alternativeName>
</protein>
<accession>Q8E8C1</accession>
<dbReference type="EMBL" id="AE014299">
    <property type="protein sequence ID" value="AAN57705.1"/>
    <property type="molecule type" value="Genomic_DNA"/>
</dbReference>
<dbReference type="RefSeq" id="NP_720262.1">
    <property type="nucleotide sequence ID" value="NC_004347.2"/>
</dbReference>
<dbReference type="RefSeq" id="WP_011074329.1">
    <property type="nucleotide sequence ID" value="NC_004347.2"/>
</dbReference>
<dbReference type="SMR" id="Q8E8C1"/>
<dbReference type="STRING" id="211586.SO_4746"/>
<dbReference type="PaxDb" id="211586-SO_4746"/>
<dbReference type="KEGG" id="son:SO_4746"/>
<dbReference type="PATRIC" id="fig|211586.12.peg.4603"/>
<dbReference type="eggNOG" id="COG0355">
    <property type="taxonomic scope" value="Bacteria"/>
</dbReference>
<dbReference type="HOGENOM" id="CLU_084338_2_0_6"/>
<dbReference type="OrthoDB" id="9791445at2"/>
<dbReference type="PhylomeDB" id="Q8E8C1"/>
<dbReference type="BioCyc" id="SONE211586:G1GMP-4391-MONOMER"/>
<dbReference type="Proteomes" id="UP000008186">
    <property type="component" value="Chromosome"/>
</dbReference>
<dbReference type="GO" id="GO:0005886">
    <property type="term" value="C:plasma membrane"/>
    <property type="evidence" value="ECO:0007669"/>
    <property type="project" value="UniProtKB-SubCell"/>
</dbReference>
<dbReference type="GO" id="GO:0045259">
    <property type="term" value="C:proton-transporting ATP synthase complex"/>
    <property type="evidence" value="ECO:0007669"/>
    <property type="project" value="UniProtKB-KW"/>
</dbReference>
<dbReference type="GO" id="GO:0005524">
    <property type="term" value="F:ATP binding"/>
    <property type="evidence" value="ECO:0007669"/>
    <property type="project" value="UniProtKB-UniRule"/>
</dbReference>
<dbReference type="GO" id="GO:0046933">
    <property type="term" value="F:proton-transporting ATP synthase activity, rotational mechanism"/>
    <property type="evidence" value="ECO:0007669"/>
    <property type="project" value="UniProtKB-UniRule"/>
</dbReference>
<dbReference type="GO" id="GO:0015986">
    <property type="term" value="P:proton motive force-driven ATP synthesis"/>
    <property type="evidence" value="ECO:0000318"/>
    <property type="project" value="GO_Central"/>
</dbReference>
<dbReference type="CDD" id="cd12152">
    <property type="entry name" value="F1-ATPase_delta"/>
    <property type="match status" value="1"/>
</dbReference>
<dbReference type="FunFam" id="1.20.5.440:FF:000001">
    <property type="entry name" value="ATP synthase epsilon chain"/>
    <property type="match status" value="1"/>
</dbReference>
<dbReference type="FunFam" id="2.60.15.10:FF:000001">
    <property type="entry name" value="ATP synthase epsilon chain"/>
    <property type="match status" value="1"/>
</dbReference>
<dbReference type="Gene3D" id="1.20.5.440">
    <property type="entry name" value="ATP synthase delta/epsilon subunit, C-terminal domain"/>
    <property type="match status" value="1"/>
</dbReference>
<dbReference type="Gene3D" id="2.60.15.10">
    <property type="entry name" value="F0F1 ATP synthase delta/epsilon subunit, N-terminal"/>
    <property type="match status" value="1"/>
</dbReference>
<dbReference type="HAMAP" id="MF_00530">
    <property type="entry name" value="ATP_synth_epsil_bac"/>
    <property type="match status" value="1"/>
</dbReference>
<dbReference type="InterPro" id="IPR036794">
    <property type="entry name" value="ATP_F1_dsu/esu_C_sf"/>
</dbReference>
<dbReference type="InterPro" id="IPR001469">
    <property type="entry name" value="ATP_synth_F1_dsu/esu"/>
</dbReference>
<dbReference type="InterPro" id="IPR020546">
    <property type="entry name" value="ATP_synth_F1_dsu/esu_N"/>
</dbReference>
<dbReference type="InterPro" id="IPR020547">
    <property type="entry name" value="ATP_synth_F1_esu_C"/>
</dbReference>
<dbReference type="InterPro" id="IPR036771">
    <property type="entry name" value="ATPsynth_dsu/esu_N"/>
</dbReference>
<dbReference type="NCBIfam" id="TIGR01216">
    <property type="entry name" value="ATP_synt_epsi"/>
    <property type="match status" value="1"/>
</dbReference>
<dbReference type="NCBIfam" id="NF001847">
    <property type="entry name" value="PRK00571.1-4"/>
    <property type="match status" value="1"/>
</dbReference>
<dbReference type="PANTHER" id="PTHR13822">
    <property type="entry name" value="ATP SYNTHASE DELTA/EPSILON CHAIN"/>
    <property type="match status" value="1"/>
</dbReference>
<dbReference type="PANTHER" id="PTHR13822:SF10">
    <property type="entry name" value="ATP SYNTHASE EPSILON CHAIN, CHLOROPLASTIC"/>
    <property type="match status" value="1"/>
</dbReference>
<dbReference type="Pfam" id="PF00401">
    <property type="entry name" value="ATP-synt_DE"/>
    <property type="match status" value="1"/>
</dbReference>
<dbReference type="Pfam" id="PF02823">
    <property type="entry name" value="ATP-synt_DE_N"/>
    <property type="match status" value="1"/>
</dbReference>
<dbReference type="SUPFAM" id="SSF46604">
    <property type="entry name" value="Epsilon subunit of F1F0-ATP synthase C-terminal domain"/>
    <property type="match status" value="1"/>
</dbReference>
<dbReference type="SUPFAM" id="SSF51344">
    <property type="entry name" value="Epsilon subunit of F1F0-ATP synthase N-terminal domain"/>
    <property type="match status" value="1"/>
</dbReference>